<organism>
    <name type="scientific">Bacillus subtilis (strain 168)</name>
    <dbReference type="NCBI Taxonomy" id="224308"/>
    <lineage>
        <taxon>Bacteria</taxon>
        <taxon>Bacillati</taxon>
        <taxon>Bacillota</taxon>
        <taxon>Bacilli</taxon>
        <taxon>Bacillales</taxon>
        <taxon>Bacillaceae</taxon>
        <taxon>Bacillus</taxon>
    </lineage>
</organism>
<reference key="1">
    <citation type="submission" date="1997-04" db="EMBL/GenBank/DDBJ databases">
        <authorList>
            <person name="Denizot F."/>
        </authorList>
    </citation>
    <scope>NUCLEOTIDE SEQUENCE [GENOMIC DNA]</scope>
    <source>
        <strain>168</strain>
    </source>
</reference>
<reference key="2">
    <citation type="journal article" date="1997" name="Nature">
        <title>The complete genome sequence of the Gram-positive bacterium Bacillus subtilis.</title>
        <authorList>
            <person name="Kunst F."/>
            <person name="Ogasawara N."/>
            <person name="Moszer I."/>
            <person name="Albertini A.M."/>
            <person name="Alloni G."/>
            <person name="Azevedo V."/>
            <person name="Bertero M.G."/>
            <person name="Bessieres P."/>
            <person name="Bolotin A."/>
            <person name="Borchert S."/>
            <person name="Borriss R."/>
            <person name="Boursier L."/>
            <person name="Brans A."/>
            <person name="Braun M."/>
            <person name="Brignell S.C."/>
            <person name="Bron S."/>
            <person name="Brouillet S."/>
            <person name="Bruschi C.V."/>
            <person name="Caldwell B."/>
            <person name="Capuano V."/>
            <person name="Carter N.M."/>
            <person name="Choi S.-K."/>
            <person name="Codani J.-J."/>
            <person name="Connerton I.F."/>
            <person name="Cummings N.J."/>
            <person name="Daniel R.A."/>
            <person name="Denizot F."/>
            <person name="Devine K.M."/>
            <person name="Duesterhoeft A."/>
            <person name="Ehrlich S.D."/>
            <person name="Emmerson P.T."/>
            <person name="Entian K.-D."/>
            <person name="Errington J."/>
            <person name="Fabret C."/>
            <person name="Ferrari E."/>
            <person name="Foulger D."/>
            <person name="Fritz C."/>
            <person name="Fujita M."/>
            <person name="Fujita Y."/>
            <person name="Fuma S."/>
            <person name="Galizzi A."/>
            <person name="Galleron N."/>
            <person name="Ghim S.-Y."/>
            <person name="Glaser P."/>
            <person name="Goffeau A."/>
            <person name="Golightly E.J."/>
            <person name="Grandi G."/>
            <person name="Guiseppi G."/>
            <person name="Guy B.J."/>
            <person name="Haga K."/>
            <person name="Haiech J."/>
            <person name="Harwood C.R."/>
            <person name="Henaut A."/>
            <person name="Hilbert H."/>
            <person name="Holsappel S."/>
            <person name="Hosono S."/>
            <person name="Hullo M.-F."/>
            <person name="Itaya M."/>
            <person name="Jones L.-M."/>
            <person name="Joris B."/>
            <person name="Karamata D."/>
            <person name="Kasahara Y."/>
            <person name="Klaerr-Blanchard M."/>
            <person name="Klein C."/>
            <person name="Kobayashi Y."/>
            <person name="Koetter P."/>
            <person name="Koningstein G."/>
            <person name="Krogh S."/>
            <person name="Kumano M."/>
            <person name="Kurita K."/>
            <person name="Lapidus A."/>
            <person name="Lardinois S."/>
            <person name="Lauber J."/>
            <person name="Lazarevic V."/>
            <person name="Lee S.-M."/>
            <person name="Levine A."/>
            <person name="Liu H."/>
            <person name="Masuda S."/>
            <person name="Mauel C."/>
            <person name="Medigue C."/>
            <person name="Medina N."/>
            <person name="Mellado R.P."/>
            <person name="Mizuno M."/>
            <person name="Moestl D."/>
            <person name="Nakai S."/>
            <person name="Noback M."/>
            <person name="Noone D."/>
            <person name="O'Reilly M."/>
            <person name="Ogawa K."/>
            <person name="Ogiwara A."/>
            <person name="Oudega B."/>
            <person name="Park S.-H."/>
            <person name="Parro V."/>
            <person name="Pohl T.M."/>
            <person name="Portetelle D."/>
            <person name="Porwollik S."/>
            <person name="Prescott A.M."/>
            <person name="Presecan E."/>
            <person name="Pujic P."/>
            <person name="Purnelle B."/>
            <person name="Rapoport G."/>
            <person name="Rey M."/>
            <person name="Reynolds S."/>
            <person name="Rieger M."/>
            <person name="Rivolta C."/>
            <person name="Rocha E."/>
            <person name="Roche B."/>
            <person name="Rose M."/>
            <person name="Sadaie Y."/>
            <person name="Sato T."/>
            <person name="Scanlan E."/>
            <person name="Schleich S."/>
            <person name="Schroeter R."/>
            <person name="Scoffone F."/>
            <person name="Sekiguchi J."/>
            <person name="Sekowska A."/>
            <person name="Seror S.J."/>
            <person name="Serror P."/>
            <person name="Shin B.-S."/>
            <person name="Soldo B."/>
            <person name="Sorokin A."/>
            <person name="Tacconi E."/>
            <person name="Takagi T."/>
            <person name="Takahashi H."/>
            <person name="Takemaru K."/>
            <person name="Takeuchi M."/>
            <person name="Tamakoshi A."/>
            <person name="Tanaka T."/>
            <person name="Terpstra P."/>
            <person name="Tognoni A."/>
            <person name="Tosato V."/>
            <person name="Uchiyama S."/>
            <person name="Vandenbol M."/>
            <person name="Vannier F."/>
            <person name="Vassarotti A."/>
            <person name="Viari A."/>
            <person name="Wambutt R."/>
            <person name="Wedler E."/>
            <person name="Wedler H."/>
            <person name="Weitzenegger T."/>
            <person name="Winters P."/>
            <person name="Wipat A."/>
            <person name="Yamamoto H."/>
            <person name="Yamane K."/>
            <person name="Yasumoto K."/>
            <person name="Yata K."/>
            <person name="Yoshida K."/>
            <person name="Yoshikawa H.-F."/>
            <person name="Zumstein E."/>
            <person name="Yoshikawa H."/>
            <person name="Danchin A."/>
        </authorList>
    </citation>
    <scope>NUCLEOTIDE SEQUENCE [LARGE SCALE GENOMIC DNA]</scope>
    <source>
        <strain>168</strain>
    </source>
</reference>
<sequence length="259" mass="29038">MNVLQTTNLSKTYYSNKGTISYQALSAFDLSVSKGEFVGIMGPSGSGKTTLLNLLATIDKPTQGEMMINGIQPKTLKDQELALFRRRELGFVFQDFNLLDTLTIRENILLPLALDKVKLREMEARLDELADTLQIKHILDHRTYEVSGGQQQRAACARAIIHNPALILADEPTGNLDSKSAKQVMNTLAQLNEEKEATILLVTHDATAASFCKRIVFIKDGRFFSEIHRGTNRQVFYQSILDTLSVLGGDFHEFENYRP</sequence>
<evidence type="ECO:0000255" key="1">
    <source>
        <dbReference type="PROSITE-ProRule" id="PRU00434"/>
    </source>
</evidence>
<evidence type="ECO:0000305" key="2"/>
<accession>O06980</accession>
<accession>Q795G2</accession>
<comment type="similarity">
    <text evidence="2">Belongs to the ABC transporter superfamily.</text>
</comment>
<feature type="chain" id="PRO_0000375896" description="Uncharacterized ABC transporter ATP-binding protein YvcR">
    <location>
        <begin position="1"/>
        <end position="259"/>
    </location>
</feature>
<feature type="domain" description="ABC transporter" evidence="1">
    <location>
        <begin position="4"/>
        <end position="248"/>
    </location>
</feature>
<feature type="binding site" evidence="1">
    <location>
        <begin position="42"/>
        <end position="49"/>
    </location>
    <ligand>
        <name>ATP</name>
        <dbReference type="ChEBI" id="CHEBI:30616"/>
    </ligand>
</feature>
<proteinExistence type="inferred from homology"/>
<keyword id="KW-0067">ATP-binding</keyword>
<keyword id="KW-0547">Nucleotide-binding</keyword>
<keyword id="KW-1185">Reference proteome</keyword>
<keyword id="KW-1278">Translocase</keyword>
<keyword id="KW-0813">Transport</keyword>
<name>YVCR_BACSU</name>
<protein>
    <recommendedName>
        <fullName>Uncharacterized ABC transporter ATP-binding protein YvcR</fullName>
        <ecNumber>7.-.-.-</ecNumber>
    </recommendedName>
</protein>
<dbReference type="EC" id="7.-.-.-"/>
<dbReference type="EMBL" id="Z94043">
    <property type="protein sequence ID" value="CAB08064.1"/>
    <property type="molecule type" value="Genomic_DNA"/>
</dbReference>
<dbReference type="EMBL" id="AL009126">
    <property type="protein sequence ID" value="CAB15475.1"/>
    <property type="molecule type" value="Genomic_DNA"/>
</dbReference>
<dbReference type="PIR" id="F70032">
    <property type="entry name" value="F70032"/>
</dbReference>
<dbReference type="RefSeq" id="WP_003228167.1">
    <property type="nucleotide sequence ID" value="NZ_OZ025638.1"/>
</dbReference>
<dbReference type="SMR" id="O06980"/>
<dbReference type="FunCoup" id="O06980">
    <property type="interactions" value="111"/>
</dbReference>
<dbReference type="STRING" id="224308.BSU34700"/>
<dbReference type="TCDB" id="3.A.1.134.5">
    <property type="family name" value="the atp-binding cassette (abc) superfamily"/>
</dbReference>
<dbReference type="PaxDb" id="224308-BSU34700"/>
<dbReference type="EnsemblBacteria" id="CAB15475">
    <property type="protein sequence ID" value="CAB15475"/>
    <property type="gene ID" value="BSU_34700"/>
</dbReference>
<dbReference type="GeneID" id="936524"/>
<dbReference type="KEGG" id="bsu:BSU34700"/>
<dbReference type="PATRIC" id="fig|224308.179.peg.3757"/>
<dbReference type="eggNOG" id="COG1136">
    <property type="taxonomic scope" value="Bacteria"/>
</dbReference>
<dbReference type="InParanoid" id="O06980"/>
<dbReference type="OrthoDB" id="9791546at2"/>
<dbReference type="PhylomeDB" id="O06980"/>
<dbReference type="BioCyc" id="BSUB:BSU34700-MONOMER"/>
<dbReference type="Proteomes" id="UP000001570">
    <property type="component" value="Chromosome"/>
</dbReference>
<dbReference type="GO" id="GO:0005886">
    <property type="term" value="C:plasma membrane"/>
    <property type="evidence" value="ECO:0000318"/>
    <property type="project" value="GO_Central"/>
</dbReference>
<dbReference type="GO" id="GO:0005524">
    <property type="term" value="F:ATP binding"/>
    <property type="evidence" value="ECO:0007669"/>
    <property type="project" value="UniProtKB-KW"/>
</dbReference>
<dbReference type="GO" id="GO:0016887">
    <property type="term" value="F:ATP hydrolysis activity"/>
    <property type="evidence" value="ECO:0007669"/>
    <property type="project" value="InterPro"/>
</dbReference>
<dbReference type="GO" id="GO:0022857">
    <property type="term" value="F:transmembrane transporter activity"/>
    <property type="evidence" value="ECO:0000318"/>
    <property type="project" value="GO_Central"/>
</dbReference>
<dbReference type="GO" id="GO:0055085">
    <property type="term" value="P:transmembrane transport"/>
    <property type="evidence" value="ECO:0000318"/>
    <property type="project" value="GO_Central"/>
</dbReference>
<dbReference type="CDD" id="cd03255">
    <property type="entry name" value="ABC_MJ0796_LolCDE_FtsE"/>
    <property type="match status" value="1"/>
</dbReference>
<dbReference type="FunFam" id="3.40.50.300:FF:000032">
    <property type="entry name" value="Export ABC transporter ATP-binding protein"/>
    <property type="match status" value="1"/>
</dbReference>
<dbReference type="Gene3D" id="3.40.50.300">
    <property type="entry name" value="P-loop containing nucleotide triphosphate hydrolases"/>
    <property type="match status" value="1"/>
</dbReference>
<dbReference type="InterPro" id="IPR003593">
    <property type="entry name" value="AAA+_ATPase"/>
</dbReference>
<dbReference type="InterPro" id="IPR003439">
    <property type="entry name" value="ABC_transporter-like_ATP-bd"/>
</dbReference>
<dbReference type="InterPro" id="IPR017911">
    <property type="entry name" value="MacB-like_ATP-bd"/>
</dbReference>
<dbReference type="InterPro" id="IPR027417">
    <property type="entry name" value="P-loop_NTPase"/>
</dbReference>
<dbReference type="PANTHER" id="PTHR42798:SF7">
    <property type="entry name" value="ALPHA-D-RIBOSE 1-METHYLPHOSPHONATE 5-TRIPHOSPHATE SYNTHASE SUBUNIT PHNL"/>
    <property type="match status" value="1"/>
</dbReference>
<dbReference type="PANTHER" id="PTHR42798">
    <property type="entry name" value="LIPOPROTEIN-RELEASING SYSTEM ATP-BINDING PROTEIN LOLD"/>
    <property type="match status" value="1"/>
</dbReference>
<dbReference type="Pfam" id="PF00005">
    <property type="entry name" value="ABC_tran"/>
    <property type="match status" value="1"/>
</dbReference>
<dbReference type="SMART" id="SM00382">
    <property type="entry name" value="AAA"/>
    <property type="match status" value="1"/>
</dbReference>
<dbReference type="SUPFAM" id="SSF52540">
    <property type="entry name" value="P-loop containing nucleoside triphosphate hydrolases"/>
    <property type="match status" value="1"/>
</dbReference>
<dbReference type="PROSITE" id="PS50893">
    <property type="entry name" value="ABC_TRANSPORTER_2"/>
    <property type="match status" value="1"/>
</dbReference>
<gene>
    <name type="primary">yvcR</name>
    <name type="ordered locus">BSU34700</name>
</gene>